<reference key="1">
    <citation type="journal article" date="2003" name="Proc. Natl. Acad. Sci. U.S.A.">
        <title>The genome sequence of Clostridium tetani, the causative agent of tetanus disease.</title>
        <authorList>
            <person name="Brueggemann H."/>
            <person name="Baeumer S."/>
            <person name="Fricke W.F."/>
            <person name="Wiezer A."/>
            <person name="Liesegang H."/>
            <person name="Decker I."/>
            <person name="Herzberg C."/>
            <person name="Martinez-Arias R."/>
            <person name="Merkl R."/>
            <person name="Henne A."/>
            <person name="Gottschalk G."/>
        </authorList>
    </citation>
    <scope>NUCLEOTIDE SEQUENCE [LARGE SCALE GENOMIC DNA]</scope>
    <source>
        <strain>Massachusetts / E88</strain>
    </source>
</reference>
<accession>Q890N7</accession>
<comment type="function">
    <text evidence="1">One of the primary rRNA binding proteins, it binds directly to 16S rRNA where it nucleates assembly of the head domain of the 30S subunit. Is located at the subunit interface close to the decoding center, probably blocks exit of the E-site tRNA.</text>
</comment>
<comment type="subunit">
    <text evidence="1">Part of the 30S ribosomal subunit. Contacts proteins S9 and S11.</text>
</comment>
<comment type="similarity">
    <text evidence="1">Belongs to the universal ribosomal protein uS7 family.</text>
</comment>
<dbReference type="EMBL" id="AE015927">
    <property type="protein sequence ID" value="AAO37059.1"/>
    <property type="molecule type" value="Genomic_DNA"/>
</dbReference>
<dbReference type="RefSeq" id="WP_011100720.1">
    <property type="nucleotide sequence ID" value="NC_004557.1"/>
</dbReference>
<dbReference type="SMR" id="Q890N7"/>
<dbReference type="STRING" id="212717.CTC_02605"/>
<dbReference type="GeneID" id="24255089"/>
<dbReference type="KEGG" id="ctc:CTC_02605"/>
<dbReference type="HOGENOM" id="CLU_072226_1_1_9"/>
<dbReference type="OrthoDB" id="9807653at2"/>
<dbReference type="Proteomes" id="UP000001412">
    <property type="component" value="Chromosome"/>
</dbReference>
<dbReference type="GO" id="GO:0015935">
    <property type="term" value="C:small ribosomal subunit"/>
    <property type="evidence" value="ECO:0007669"/>
    <property type="project" value="InterPro"/>
</dbReference>
<dbReference type="GO" id="GO:0019843">
    <property type="term" value="F:rRNA binding"/>
    <property type="evidence" value="ECO:0007669"/>
    <property type="project" value="UniProtKB-UniRule"/>
</dbReference>
<dbReference type="GO" id="GO:0003735">
    <property type="term" value="F:structural constituent of ribosome"/>
    <property type="evidence" value="ECO:0007669"/>
    <property type="project" value="InterPro"/>
</dbReference>
<dbReference type="GO" id="GO:0000049">
    <property type="term" value="F:tRNA binding"/>
    <property type="evidence" value="ECO:0007669"/>
    <property type="project" value="UniProtKB-UniRule"/>
</dbReference>
<dbReference type="GO" id="GO:0006412">
    <property type="term" value="P:translation"/>
    <property type="evidence" value="ECO:0007669"/>
    <property type="project" value="UniProtKB-UniRule"/>
</dbReference>
<dbReference type="CDD" id="cd14869">
    <property type="entry name" value="uS7_Bacteria"/>
    <property type="match status" value="1"/>
</dbReference>
<dbReference type="FunFam" id="1.10.455.10:FF:000001">
    <property type="entry name" value="30S ribosomal protein S7"/>
    <property type="match status" value="1"/>
</dbReference>
<dbReference type="Gene3D" id="1.10.455.10">
    <property type="entry name" value="Ribosomal protein S7 domain"/>
    <property type="match status" value="1"/>
</dbReference>
<dbReference type="HAMAP" id="MF_00480_B">
    <property type="entry name" value="Ribosomal_uS7_B"/>
    <property type="match status" value="1"/>
</dbReference>
<dbReference type="InterPro" id="IPR000235">
    <property type="entry name" value="Ribosomal_uS7"/>
</dbReference>
<dbReference type="InterPro" id="IPR005717">
    <property type="entry name" value="Ribosomal_uS7_bac/org-type"/>
</dbReference>
<dbReference type="InterPro" id="IPR020606">
    <property type="entry name" value="Ribosomal_uS7_CS"/>
</dbReference>
<dbReference type="InterPro" id="IPR023798">
    <property type="entry name" value="Ribosomal_uS7_dom"/>
</dbReference>
<dbReference type="InterPro" id="IPR036823">
    <property type="entry name" value="Ribosomal_uS7_dom_sf"/>
</dbReference>
<dbReference type="NCBIfam" id="TIGR01029">
    <property type="entry name" value="rpsG_bact"/>
    <property type="match status" value="1"/>
</dbReference>
<dbReference type="PANTHER" id="PTHR11205">
    <property type="entry name" value="RIBOSOMAL PROTEIN S7"/>
    <property type="match status" value="1"/>
</dbReference>
<dbReference type="Pfam" id="PF00177">
    <property type="entry name" value="Ribosomal_S7"/>
    <property type="match status" value="1"/>
</dbReference>
<dbReference type="PIRSF" id="PIRSF002122">
    <property type="entry name" value="RPS7p_RPS7a_RPS5e_RPS7o"/>
    <property type="match status" value="1"/>
</dbReference>
<dbReference type="SUPFAM" id="SSF47973">
    <property type="entry name" value="Ribosomal protein S7"/>
    <property type="match status" value="1"/>
</dbReference>
<dbReference type="PROSITE" id="PS00052">
    <property type="entry name" value="RIBOSOMAL_S7"/>
    <property type="match status" value="1"/>
</dbReference>
<name>RS7_CLOTE</name>
<evidence type="ECO:0000255" key="1">
    <source>
        <dbReference type="HAMAP-Rule" id="MF_00480"/>
    </source>
</evidence>
<evidence type="ECO:0000305" key="2"/>
<organism>
    <name type="scientific">Clostridium tetani (strain Massachusetts / E88)</name>
    <dbReference type="NCBI Taxonomy" id="212717"/>
    <lineage>
        <taxon>Bacteria</taxon>
        <taxon>Bacillati</taxon>
        <taxon>Bacillota</taxon>
        <taxon>Clostridia</taxon>
        <taxon>Eubacteriales</taxon>
        <taxon>Clostridiaceae</taxon>
        <taxon>Clostridium</taxon>
    </lineage>
</organism>
<proteinExistence type="inferred from homology"/>
<sequence>MPRKGYIGKRDVLPDPMYNSKVLTKLINSLMYDGKKGLAQKICYDAFDVIQNKTGKEPMEVFEEAMNNVMPLLEVKARRIGGATYQVPLEVRPERRQTLGIRWILIAARKRGEKYMSERLAGELMDAANNLGAAVKKREETHKMAEANKAFAHYRY</sequence>
<feature type="chain" id="PRO_0000124251" description="Small ribosomal subunit protein uS7">
    <location>
        <begin position="1"/>
        <end position="156"/>
    </location>
</feature>
<keyword id="KW-1185">Reference proteome</keyword>
<keyword id="KW-0687">Ribonucleoprotein</keyword>
<keyword id="KW-0689">Ribosomal protein</keyword>
<keyword id="KW-0694">RNA-binding</keyword>
<keyword id="KW-0699">rRNA-binding</keyword>
<keyword id="KW-0820">tRNA-binding</keyword>
<protein>
    <recommendedName>
        <fullName evidence="1">Small ribosomal subunit protein uS7</fullName>
    </recommendedName>
    <alternativeName>
        <fullName evidence="2">30S ribosomal protein S7</fullName>
    </alternativeName>
</protein>
<gene>
    <name evidence="1" type="primary">rpsG</name>
    <name type="ordered locus">CTC_02605</name>
</gene>